<protein>
    <recommendedName>
        <fullName>Transmembrane protein 104 homolog</fullName>
    </recommendedName>
</protein>
<proteinExistence type="evidence at transcript level"/>
<reference key="1">
    <citation type="journal article" date="2000" name="Science">
        <title>The genome sequence of Drosophila melanogaster.</title>
        <authorList>
            <person name="Adams M.D."/>
            <person name="Celniker S.E."/>
            <person name="Holt R.A."/>
            <person name="Evans C.A."/>
            <person name="Gocayne J.D."/>
            <person name="Amanatides P.G."/>
            <person name="Scherer S.E."/>
            <person name="Li P.W."/>
            <person name="Hoskins R.A."/>
            <person name="Galle R.F."/>
            <person name="George R.A."/>
            <person name="Lewis S.E."/>
            <person name="Richards S."/>
            <person name="Ashburner M."/>
            <person name="Henderson S.N."/>
            <person name="Sutton G.G."/>
            <person name="Wortman J.R."/>
            <person name="Yandell M.D."/>
            <person name="Zhang Q."/>
            <person name="Chen L.X."/>
            <person name="Brandon R.C."/>
            <person name="Rogers Y.-H.C."/>
            <person name="Blazej R.G."/>
            <person name="Champe M."/>
            <person name="Pfeiffer B.D."/>
            <person name="Wan K.H."/>
            <person name="Doyle C."/>
            <person name="Baxter E.G."/>
            <person name="Helt G."/>
            <person name="Nelson C.R."/>
            <person name="Miklos G.L.G."/>
            <person name="Abril J.F."/>
            <person name="Agbayani A."/>
            <person name="An H.-J."/>
            <person name="Andrews-Pfannkoch C."/>
            <person name="Baldwin D."/>
            <person name="Ballew R.M."/>
            <person name="Basu A."/>
            <person name="Baxendale J."/>
            <person name="Bayraktaroglu L."/>
            <person name="Beasley E.M."/>
            <person name="Beeson K.Y."/>
            <person name="Benos P.V."/>
            <person name="Berman B.P."/>
            <person name="Bhandari D."/>
            <person name="Bolshakov S."/>
            <person name="Borkova D."/>
            <person name="Botchan M.R."/>
            <person name="Bouck J."/>
            <person name="Brokstein P."/>
            <person name="Brottier P."/>
            <person name="Burtis K.C."/>
            <person name="Busam D.A."/>
            <person name="Butler H."/>
            <person name="Cadieu E."/>
            <person name="Center A."/>
            <person name="Chandra I."/>
            <person name="Cherry J.M."/>
            <person name="Cawley S."/>
            <person name="Dahlke C."/>
            <person name="Davenport L.B."/>
            <person name="Davies P."/>
            <person name="de Pablos B."/>
            <person name="Delcher A."/>
            <person name="Deng Z."/>
            <person name="Mays A.D."/>
            <person name="Dew I."/>
            <person name="Dietz S.M."/>
            <person name="Dodson K."/>
            <person name="Doup L.E."/>
            <person name="Downes M."/>
            <person name="Dugan-Rocha S."/>
            <person name="Dunkov B.C."/>
            <person name="Dunn P."/>
            <person name="Durbin K.J."/>
            <person name="Evangelista C.C."/>
            <person name="Ferraz C."/>
            <person name="Ferriera S."/>
            <person name="Fleischmann W."/>
            <person name="Fosler C."/>
            <person name="Gabrielian A.E."/>
            <person name="Garg N.S."/>
            <person name="Gelbart W.M."/>
            <person name="Glasser K."/>
            <person name="Glodek A."/>
            <person name="Gong F."/>
            <person name="Gorrell J.H."/>
            <person name="Gu Z."/>
            <person name="Guan P."/>
            <person name="Harris M."/>
            <person name="Harris N.L."/>
            <person name="Harvey D.A."/>
            <person name="Heiman T.J."/>
            <person name="Hernandez J.R."/>
            <person name="Houck J."/>
            <person name="Hostin D."/>
            <person name="Houston K.A."/>
            <person name="Howland T.J."/>
            <person name="Wei M.-H."/>
            <person name="Ibegwam C."/>
            <person name="Jalali M."/>
            <person name="Kalush F."/>
            <person name="Karpen G.H."/>
            <person name="Ke Z."/>
            <person name="Kennison J.A."/>
            <person name="Ketchum K.A."/>
            <person name="Kimmel B.E."/>
            <person name="Kodira C.D."/>
            <person name="Kraft C.L."/>
            <person name="Kravitz S."/>
            <person name="Kulp D."/>
            <person name="Lai Z."/>
            <person name="Lasko P."/>
            <person name="Lei Y."/>
            <person name="Levitsky A.A."/>
            <person name="Li J.H."/>
            <person name="Li Z."/>
            <person name="Liang Y."/>
            <person name="Lin X."/>
            <person name="Liu X."/>
            <person name="Mattei B."/>
            <person name="McIntosh T.C."/>
            <person name="McLeod M.P."/>
            <person name="McPherson D."/>
            <person name="Merkulov G."/>
            <person name="Milshina N.V."/>
            <person name="Mobarry C."/>
            <person name="Morris J."/>
            <person name="Moshrefi A."/>
            <person name="Mount S.M."/>
            <person name="Moy M."/>
            <person name="Murphy B."/>
            <person name="Murphy L."/>
            <person name="Muzny D.M."/>
            <person name="Nelson D.L."/>
            <person name="Nelson D.R."/>
            <person name="Nelson K.A."/>
            <person name="Nixon K."/>
            <person name="Nusskern D.R."/>
            <person name="Pacleb J.M."/>
            <person name="Palazzolo M."/>
            <person name="Pittman G.S."/>
            <person name="Pan S."/>
            <person name="Pollard J."/>
            <person name="Puri V."/>
            <person name="Reese M.G."/>
            <person name="Reinert K."/>
            <person name="Remington K."/>
            <person name="Saunders R.D.C."/>
            <person name="Scheeler F."/>
            <person name="Shen H."/>
            <person name="Shue B.C."/>
            <person name="Siden-Kiamos I."/>
            <person name="Simpson M."/>
            <person name="Skupski M.P."/>
            <person name="Smith T.J."/>
            <person name="Spier E."/>
            <person name="Spradling A.C."/>
            <person name="Stapleton M."/>
            <person name="Strong R."/>
            <person name="Sun E."/>
            <person name="Svirskas R."/>
            <person name="Tector C."/>
            <person name="Turner R."/>
            <person name="Venter E."/>
            <person name="Wang A.H."/>
            <person name="Wang X."/>
            <person name="Wang Z.-Y."/>
            <person name="Wassarman D.A."/>
            <person name="Weinstock G.M."/>
            <person name="Weissenbach J."/>
            <person name="Williams S.M."/>
            <person name="Woodage T."/>
            <person name="Worley K.C."/>
            <person name="Wu D."/>
            <person name="Yang S."/>
            <person name="Yao Q.A."/>
            <person name="Ye J."/>
            <person name="Yeh R.-F."/>
            <person name="Zaveri J.S."/>
            <person name="Zhan M."/>
            <person name="Zhang G."/>
            <person name="Zhao Q."/>
            <person name="Zheng L."/>
            <person name="Zheng X.H."/>
            <person name="Zhong F.N."/>
            <person name="Zhong W."/>
            <person name="Zhou X."/>
            <person name="Zhu S.C."/>
            <person name="Zhu X."/>
            <person name="Smith H.O."/>
            <person name="Gibbs R.A."/>
            <person name="Myers E.W."/>
            <person name="Rubin G.M."/>
            <person name="Venter J.C."/>
        </authorList>
    </citation>
    <scope>NUCLEOTIDE SEQUENCE [LARGE SCALE GENOMIC DNA]</scope>
    <source>
        <strain>Berkeley</strain>
    </source>
</reference>
<reference key="2">
    <citation type="journal article" date="2002" name="Genome Biol.">
        <title>Annotation of the Drosophila melanogaster euchromatic genome: a systematic review.</title>
        <authorList>
            <person name="Misra S."/>
            <person name="Crosby M.A."/>
            <person name="Mungall C.J."/>
            <person name="Matthews B.B."/>
            <person name="Campbell K.S."/>
            <person name="Hradecky P."/>
            <person name="Huang Y."/>
            <person name="Kaminker J.S."/>
            <person name="Millburn G.H."/>
            <person name="Prochnik S.E."/>
            <person name="Smith C.D."/>
            <person name="Tupy J.L."/>
            <person name="Whitfield E.J."/>
            <person name="Bayraktaroglu L."/>
            <person name="Berman B.P."/>
            <person name="Bettencourt B.R."/>
            <person name="Celniker S.E."/>
            <person name="de Grey A.D.N.J."/>
            <person name="Drysdale R.A."/>
            <person name="Harris N.L."/>
            <person name="Richter J."/>
            <person name="Russo S."/>
            <person name="Schroeder A.J."/>
            <person name="Shu S.Q."/>
            <person name="Stapleton M."/>
            <person name="Yamada C."/>
            <person name="Ashburner M."/>
            <person name="Gelbart W.M."/>
            <person name="Rubin G.M."/>
            <person name="Lewis S.E."/>
        </authorList>
    </citation>
    <scope>GENOME REANNOTATION</scope>
    <source>
        <strain>Berkeley</strain>
    </source>
</reference>
<reference key="3">
    <citation type="journal article" date="2002" name="Genome Biol.">
        <title>A Drosophila full-length cDNA resource.</title>
        <authorList>
            <person name="Stapleton M."/>
            <person name="Carlson J.W."/>
            <person name="Brokstein P."/>
            <person name="Yu C."/>
            <person name="Champe M."/>
            <person name="George R.A."/>
            <person name="Guarin H."/>
            <person name="Kronmiller B."/>
            <person name="Pacleb J.M."/>
            <person name="Park S."/>
            <person name="Wan K.H."/>
            <person name="Rubin G.M."/>
            <person name="Celniker S.E."/>
        </authorList>
    </citation>
    <scope>NUCLEOTIDE SEQUENCE [LARGE SCALE MRNA]</scope>
    <source>
        <strain>Berkeley</strain>
        <tissue>Embryo</tissue>
    </source>
</reference>
<name>TM104_DROME</name>
<sequence>MPRLVNGREAAPTYSNLVGFIFIFNLIVGTGALTLPGVFARAGWMLSLIVIVLLAIISYMTVTFIIEAMACANAIRNWQTLQALRQSRSSAENSENDDNADDVSLASGAEQVGDFERVPLTIQNREFHYYQLSHKFELGEMATLFFNEFGRVMFYLCLIVYLYGDLSIYSAAVARSLRDVVCDQTNGTDTNNLMYWPGDFENNTSLACWKEHTISRLNMYRVLLIGFTLIFGPFVYFNVQKTKYLQMLTAAFRWMAFTLMICISLKLLISRGAKGHPATFNVYGIPSLFGACVYSFMCHHSLPSLLAPIRHKSMVSKILSIDYIIICAFYILLAMTGIFAFERIEDLYTLDFLPYDVAYVDFWSGLLICIDYFLALFPIFTLSTSFPIVAITLKNNLQSLFLDMSQYESYSVILRLCFPLLAIIPPFCITYFTESLSSLVAFTGTYAGTGIQYIIPVFLVYFARRTCSELLGSGVVNRFKSPFKSSAWLVFVFIWSILCVCLVSINLFS</sequence>
<gene>
    <name type="ORF">CG5262</name>
</gene>
<organism>
    <name type="scientific">Drosophila melanogaster</name>
    <name type="common">Fruit fly</name>
    <dbReference type="NCBI Taxonomy" id="7227"/>
    <lineage>
        <taxon>Eukaryota</taxon>
        <taxon>Metazoa</taxon>
        <taxon>Ecdysozoa</taxon>
        <taxon>Arthropoda</taxon>
        <taxon>Hexapoda</taxon>
        <taxon>Insecta</taxon>
        <taxon>Pterygota</taxon>
        <taxon>Neoptera</taxon>
        <taxon>Endopterygota</taxon>
        <taxon>Diptera</taxon>
        <taxon>Brachycera</taxon>
        <taxon>Muscomorpha</taxon>
        <taxon>Ephydroidea</taxon>
        <taxon>Drosophilidae</taxon>
        <taxon>Drosophila</taxon>
        <taxon>Sophophora</taxon>
    </lineage>
</organism>
<dbReference type="EMBL" id="AE014296">
    <property type="protein sequence ID" value="AAF51595.2"/>
    <property type="molecule type" value="Genomic_DNA"/>
</dbReference>
<dbReference type="EMBL" id="AY118576">
    <property type="protein sequence ID" value="AAM49945.1"/>
    <property type="molecule type" value="mRNA"/>
</dbReference>
<dbReference type="RefSeq" id="NP_001262109.1">
    <property type="nucleotide sequence ID" value="NM_001275180.1"/>
</dbReference>
<dbReference type="RefSeq" id="NP_649223.1">
    <property type="nucleotide sequence ID" value="NM_140966.2"/>
</dbReference>
<dbReference type="FunCoup" id="Q9VPF8">
    <property type="interactions" value="100"/>
</dbReference>
<dbReference type="STRING" id="7227.FBpp0302735"/>
<dbReference type="GlyGen" id="Q9VPF8">
    <property type="glycosylation" value="3 sites"/>
</dbReference>
<dbReference type="PaxDb" id="7227-FBpp0302735"/>
<dbReference type="EnsemblMetazoa" id="FBtr0078230">
    <property type="protein sequence ID" value="FBpp0077888"/>
    <property type="gene ID" value="FBgn0036988"/>
</dbReference>
<dbReference type="EnsemblMetazoa" id="FBtr0310615">
    <property type="protein sequence ID" value="FBpp0302735"/>
    <property type="gene ID" value="FBgn0036988"/>
</dbReference>
<dbReference type="GeneID" id="40258"/>
<dbReference type="KEGG" id="dme:Dmel_CG5262"/>
<dbReference type="UCSC" id="CG5262-RA">
    <property type="organism name" value="d. melanogaster"/>
</dbReference>
<dbReference type="AGR" id="FB:FBgn0036988"/>
<dbReference type="FlyBase" id="FBgn0036988">
    <property type="gene designation" value="CG5262"/>
</dbReference>
<dbReference type="VEuPathDB" id="VectorBase:FBgn0036988"/>
<dbReference type="eggNOG" id="KOG3832">
    <property type="taxonomic scope" value="Eukaryota"/>
</dbReference>
<dbReference type="GeneTree" id="ENSGT00390000001244"/>
<dbReference type="HOGENOM" id="CLU_025541_1_0_1"/>
<dbReference type="InParanoid" id="Q9VPF8"/>
<dbReference type="OMA" id="GHREGHP"/>
<dbReference type="OrthoDB" id="294541at2759"/>
<dbReference type="PhylomeDB" id="Q9VPF8"/>
<dbReference type="BioGRID-ORCS" id="40258">
    <property type="hits" value="0 hits in 1 CRISPR screen"/>
</dbReference>
<dbReference type="GenomeRNAi" id="40258"/>
<dbReference type="PRO" id="PR:Q9VPF8"/>
<dbReference type="Proteomes" id="UP000000803">
    <property type="component" value="Chromosome 3L"/>
</dbReference>
<dbReference type="Bgee" id="FBgn0036988">
    <property type="expression patterns" value="Expressed in saliva-secreting gland and 68 other cell types or tissues"/>
</dbReference>
<dbReference type="ExpressionAtlas" id="Q9VPF8">
    <property type="expression patterns" value="baseline and differential"/>
</dbReference>
<dbReference type="GO" id="GO:0016020">
    <property type="term" value="C:membrane"/>
    <property type="evidence" value="ECO:0007669"/>
    <property type="project" value="UniProtKB-SubCell"/>
</dbReference>
<dbReference type="InterPro" id="IPR013057">
    <property type="entry name" value="AA_transpt_TM"/>
</dbReference>
<dbReference type="PANTHER" id="PTHR16189:SF0">
    <property type="entry name" value="TRANSMEMBRANE PROTEIN 104"/>
    <property type="match status" value="1"/>
</dbReference>
<dbReference type="PANTHER" id="PTHR16189">
    <property type="entry name" value="TRANSMEMBRANE PROTEIN 104-RELATED"/>
    <property type="match status" value="1"/>
</dbReference>
<dbReference type="Pfam" id="PF01490">
    <property type="entry name" value="Aa_trans"/>
    <property type="match status" value="2"/>
</dbReference>
<keyword id="KW-0325">Glycoprotein</keyword>
<keyword id="KW-0472">Membrane</keyword>
<keyword id="KW-1185">Reference proteome</keyword>
<keyword id="KW-0812">Transmembrane</keyword>
<keyword id="KW-1133">Transmembrane helix</keyword>
<feature type="chain" id="PRO_0000254182" description="Transmembrane protein 104 homolog">
    <location>
        <begin position="1"/>
        <end position="509"/>
    </location>
</feature>
<feature type="topological domain" description="Cytoplasmic" evidence="1">
    <location>
        <begin position="1"/>
        <end position="19"/>
    </location>
</feature>
<feature type="transmembrane region" description="Helical" evidence="1">
    <location>
        <begin position="20"/>
        <end position="40"/>
    </location>
</feature>
<feature type="topological domain" description="Extracellular" evidence="1">
    <location>
        <begin position="41"/>
        <end position="45"/>
    </location>
</feature>
<feature type="transmembrane region" description="Helical" evidence="1">
    <location>
        <begin position="46"/>
        <end position="66"/>
    </location>
</feature>
<feature type="topological domain" description="Cytoplasmic" evidence="1">
    <location>
        <begin position="67"/>
        <end position="151"/>
    </location>
</feature>
<feature type="transmembrane region" description="Helical" evidence="1">
    <location>
        <begin position="152"/>
        <end position="172"/>
    </location>
</feature>
<feature type="topological domain" description="Extracellular" evidence="1">
    <location>
        <begin position="173"/>
        <end position="218"/>
    </location>
</feature>
<feature type="transmembrane region" description="Helical" evidence="1">
    <location>
        <begin position="219"/>
        <end position="239"/>
    </location>
</feature>
<feature type="topological domain" description="Cytoplasmic" evidence="1">
    <location>
        <begin position="240"/>
        <end position="248"/>
    </location>
</feature>
<feature type="transmembrane region" description="Helical" evidence="1">
    <location>
        <begin position="249"/>
        <end position="269"/>
    </location>
</feature>
<feature type="topological domain" description="Extracellular" evidence="1">
    <location>
        <begin position="270"/>
        <end position="277"/>
    </location>
</feature>
<feature type="transmembrane region" description="Helical" evidence="1">
    <location>
        <begin position="278"/>
        <end position="298"/>
    </location>
</feature>
<feature type="topological domain" description="Cytoplasmic" evidence="1">
    <location>
        <begin position="299"/>
        <end position="320"/>
    </location>
</feature>
<feature type="transmembrane region" description="Helical" evidence="1">
    <location>
        <begin position="321"/>
        <end position="341"/>
    </location>
</feature>
<feature type="topological domain" description="Extracellular" evidence="1">
    <location>
        <begin position="342"/>
        <end position="361"/>
    </location>
</feature>
<feature type="transmembrane region" description="Helical" evidence="1">
    <location>
        <begin position="362"/>
        <end position="382"/>
    </location>
</feature>
<feature type="topological domain" description="Cytoplasmic" evidence="1">
    <location>
        <begin position="383"/>
        <end position="411"/>
    </location>
</feature>
<feature type="transmembrane region" description="Helical" evidence="1">
    <location>
        <begin position="412"/>
        <end position="432"/>
    </location>
</feature>
<feature type="topological domain" description="Extracellular" evidence="1">
    <location>
        <begin position="433"/>
        <end position="439"/>
    </location>
</feature>
<feature type="transmembrane region" description="Helical" evidence="1">
    <location>
        <begin position="440"/>
        <end position="460"/>
    </location>
</feature>
<feature type="topological domain" description="Cytoplasmic" evidence="1">
    <location>
        <begin position="461"/>
        <end position="487"/>
    </location>
</feature>
<feature type="transmembrane region" description="Helical" evidence="1">
    <location>
        <begin position="488"/>
        <end position="508"/>
    </location>
</feature>
<feature type="topological domain" description="Extracellular" evidence="1">
    <location>
        <position position="509"/>
    </location>
</feature>
<feature type="glycosylation site" description="N-linked (GlcNAc...) asparagine" evidence="1">
    <location>
        <position position="186"/>
    </location>
</feature>
<feature type="glycosylation site" description="N-linked (GlcNAc...) asparagine" evidence="1">
    <location>
        <position position="202"/>
    </location>
</feature>
<feature type="glycosylation site" description="N-linked (GlcNAc...) asparagine" evidence="1">
    <location>
        <position position="203"/>
    </location>
</feature>
<accession>Q9VPF8</accession>
<evidence type="ECO:0000255" key="1"/>
<evidence type="ECO:0000305" key="2"/>
<comment type="subcellular location">
    <subcellularLocation>
        <location evidence="2">Membrane</location>
        <topology evidence="2">Multi-pass membrane protein</topology>
    </subcellularLocation>
</comment>
<comment type="similarity">
    <text evidence="2">Belongs to the TMEM104 family.</text>
</comment>